<name>S15A5_HUMAN</name>
<comment type="function">
    <text evidence="2">Proton oligopeptide cotransporter.</text>
</comment>
<comment type="interaction">
    <interactant intactId="EBI-11792220">
        <id>A6NIM6</id>
    </interactant>
    <interactant intactId="EBI-357345">
        <id>Q14160</id>
        <label>SCRIB</label>
    </interactant>
    <organismsDiffer>false</organismsDiffer>
    <experiments>2</experiments>
</comment>
<comment type="subcellular location">
    <subcellularLocation>
        <location evidence="2">Membrane</location>
        <topology evidence="2">Multi-pass membrane protein</topology>
    </subcellularLocation>
</comment>
<comment type="similarity">
    <text evidence="2">Belongs to the major facilitator superfamily. Proton-dependent oligopeptide transporter (POT/PTR) (TC 2.A.17) family.</text>
</comment>
<sequence length="579" mass="65263">MSVTGFTITDEKVHLYHSIEKEKTVRHIGDLCSSHSVKKIQVGICLLLVELCERFTFFEVVCNMIPFCTIKLGYHNCQAAILNLCFIGTSILTPVFVRWLTDVYLGRNKLVYICLFLHFLGTALLSVVAFPLEDFYLGTYHAVNNIPKTEQHRLFYVALLTICLGIGGVRAIVCPLGAFGLQEYGSQKTMSFFNWFYWLMNLNATIVFLGISYIQHSQAWALVLLIPFMSMLMAVITLHMIYYNLIYQSEKRCSLLTGVGVLVSALKTCHPQYCHLGRDVTSQLDHAKEKNGGCYSELHVEDTTFFLTLLPLFIFQLLYRMCIMQIPSGYYLQTMNSNLNLDGFLLPIAVMNAISSLPLLILAPFLEYFSTCLFPSKRVGSFLSTCIIAGNLFAALSVMIAGFFEIHRKHFPAVEQPLSGKVLTVSSMPCFYLILQYVLLGVAETLVNPALSVISYRFVPSNVRGTSMNFLTLFNGFGCFTGALLVKLVYLISDGNWFPNTLNKGNLESFFFFLASLTLLNVLGFCSVSQRYCNLNHFNAQNIRGSNLEETLLLHEKSLKFYGSIQEFSSSIDLWETAL</sequence>
<accession>A6NIM6</accession>
<organism>
    <name type="scientific">Homo sapiens</name>
    <name type="common">Human</name>
    <dbReference type="NCBI Taxonomy" id="9606"/>
    <lineage>
        <taxon>Eukaryota</taxon>
        <taxon>Metazoa</taxon>
        <taxon>Chordata</taxon>
        <taxon>Craniata</taxon>
        <taxon>Vertebrata</taxon>
        <taxon>Euteleostomi</taxon>
        <taxon>Mammalia</taxon>
        <taxon>Eutheria</taxon>
        <taxon>Euarchontoglires</taxon>
        <taxon>Primates</taxon>
        <taxon>Haplorrhini</taxon>
        <taxon>Catarrhini</taxon>
        <taxon>Hominidae</taxon>
        <taxon>Homo</taxon>
    </lineage>
</organism>
<proteinExistence type="evidence at protein level"/>
<evidence type="ECO:0000255" key="1"/>
<evidence type="ECO:0000305" key="2"/>
<feature type="chain" id="PRO_0000332233" description="Solute carrier family 15 member 5">
    <location>
        <begin position="1"/>
        <end position="579"/>
    </location>
</feature>
<feature type="transmembrane region" description="Helical" evidence="1">
    <location>
        <begin position="77"/>
        <end position="97"/>
    </location>
</feature>
<feature type="transmembrane region" description="Helical" evidence="1">
    <location>
        <begin position="110"/>
        <end position="130"/>
    </location>
</feature>
<feature type="transmembrane region" description="Helical" evidence="1">
    <location>
        <begin position="154"/>
        <end position="174"/>
    </location>
</feature>
<feature type="transmembrane region" description="Helical" evidence="1">
    <location>
        <begin position="191"/>
        <end position="211"/>
    </location>
</feature>
<feature type="transmembrane region" description="Helical" evidence="1">
    <location>
        <begin position="221"/>
        <end position="241"/>
    </location>
</feature>
<feature type="transmembrane region" description="Helical" evidence="1">
    <location>
        <begin position="304"/>
        <end position="324"/>
    </location>
</feature>
<feature type="transmembrane region" description="Helical" evidence="1">
    <location>
        <begin position="343"/>
        <end position="363"/>
    </location>
</feature>
<feature type="transmembrane region" description="Helical" evidence="1">
    <location>
        <begin position="386"/>
        <end position="406"/>
    </location>
</feature>
<feature type="transmembrane region" description="Helical" evidence="1">
    <location>
        <begin position="422"/>
        <end position="442"/>
    </location>
</feature>
<feature type="transmembrane region" description="Helical" evidence="1">
    <location>
        <begin position="472"/>
        <end position="492"/>
    </location>
</feature>
<feature type="transmembrane region" description="Helical" evidence="1">
    <location>
        <begin position="509"/>
        <end position="529"/>
    </location>
</feature>
<feature type="sequence variant" id="VAR_042979" description="In dbSNP:rs1799516.">
    <original>H</original>
    <variation>Q</variation>
    <location>
        <position position="141"/>
    </location>
</feature>
<feature type="sequence variant" id="VAR_042980" description="In dbSNP:rs1527014.">
    <original>P</original>
    <variation>L</variation>
    <location>
        <position position="271"/>
    </location>
</feature>
<feature type="sequence variant" id="VAR_042981" description="In dbSNP:rs1671511.">
    <original>D</original>
    <variation>E</variation>
    <location>
        <position position="494"/>
    </location>
</feature>
<feature type="sequence variant" id="VAR_042982" description="In dbSNP:rs3946358.">
    <original>E</original>
    <variation>K</variation>
    <location>
        <position position="508"/>
    </location>
</feature>
<gene>
    <name type="primary">SLC15A5</name>
</gene>
<reference key="1">
    <citation type="journal article" date="2006" name="Nature">
        <title>The finished DNA sequence of human chromosome 12.</title>
        <authorList>
            <person name="Scherer S.E."/>
            <person name="Muzny D.M."/>
            <person name="Buhay C.J."/>
            <person name="Chen R."/>
            <person name="Cree A."/>
            <person name="Ding Y."/>
            <person name="Dugan-Rocha S."/>
            <person name="Gill R."/>
            <person name="Gunaratne P."/>
            <person name="Harris R.A."/>
            <person name="Hawes A.C."/>
            <person name="Hernandez J."/>
            <person name="Hodgson A.V."/>
            <person name="Hume J."/>
            <person name="Jackson A."/>
            <person name="Khan Z.M."/>
            <person name="Kovar-Smith C."/>
            <person name="Lewis L.R."/>
            <person name="Lozado R.J."/>
            <person name="Metzker M.L."/>
            <person name="Milosavljevic A."/>
            <person name="Miner G.R."/>
            <person name="Montgomery K.T."/>
            <person name="Morgan M.B."/>
            <person name="Nazareth L.V."/>
            <person name="Scott G."/>
            <person name="Sodergren E."/>
            <person name="Song X.-Z."/>
            <person name="Steffen D."/>
            <person name="Lovering R.C."/>
            <person name="Wheeler D.A."/>
            <person name="Worley K.C."/>
            <person name="Yuan Y."/>
            <person name="Zhang Z."/>
            <person name="Adams C.Q."/>
            <person name="Ansari-Lari M.A."/>
            <person name="Ayele M."/>
            <person name="Brown M.J."/>
            <person name="Chen G."/>
            <person name="Chen Z."/>
            <person name="Clerc-Blankenburg K.P."/>
            <person name="Davis C."/>
            <person name="Delgado O."/>
            <person name="Dinh H.H."/>
            <person name="Draper H."/>
            <person name="Gonzalez-Garay M.L."/>
            <person name="Havlak P."/>
            <person name="Jackson L.R."/>
            <person name="Jacob L.S."/>
            <person name="Kelly S.H."/>
            <person name="Li L."/>
            <person name="Li Z."/>
            <person name="Liu J."/>
            <person name="Liu W."/>
            <person name="Lu J."/>
            <person name="Maheshwari M."/>
            <person name="Nguyen B.-V."/>
            <person name="Okwuonu G.O."/>
            <person name="Pasternak S."/>
            <person name="Perez L.M."/>
            <person name="Plopper F.J.H."/>
            <person name="Santibanez J."/>
            <person name="Shen H."/>
            <person name="Tabor P.E."/>
            <person name="Verduzco D."/>
            <person name="Waldron L."/>
            <person name="Wang Q."/>
            <person name="Williams G.A."/>
            <person name="Zhang J."/>
            <person name="Zhou J."/>
            <person name="Allen C.C."/>
            <person name="Amin A.G."/>
            <person name="Anyalebechi V."/>
            <person name="Bailey M."/>
            <person name="Barbaria J.A."/>
            <person name="Bimage K.E."/>
            <person name="Bryant N.P."/>
            <person name="Burch P.E."/>
            <person name="Burkett C.E."/>
            <person name="Burrell K.L."/>
            <person name="Calderon E."/>
            <person name="Cardenas V."/>
            <person name="Carter K."/>
            <person name="Casias K."/>
            <person name="Cavazos I."/>
            <person name="Cavazos S.R."/>
            <person name="Ceasar H."/>
            <person name="Chacko J."/>
            <person name="Chan S.N."/>
            <person name="Chavez D."/>
            <person name="Christopoulos C."/>
            <person name="Chu J."/>
            <person name="Cockrell R."/>
            <person name="Cox C.D."/>
            <person name="Dang M."/>
            <person name="Dathorne S.R."/>
            <person name="David R."/>
            <person name="Davis C.M."/>
            <person name="Davy-Carroll L."/>
            <person name="Deshazo D.R."/>
            <person name="Donlin J.E."/>
            <person name="D'Souza L."/>
            <person name="Eaves K.A."/>
            <person name="Egan A."/>
            <person name="Emery-Cohen A.J."/>
            <person name="Escotto M."/>
            <person name="Flagg N."/>
            <person name="Forbes L.D."/>
            <person name="Gabisi A.M."/>
            <person name="Garza M."/>
            <person name="Hamilton C."/>
            <person name="Henderson N."/>
            <person name="Hernandez O."/>
            <person name="Hines S."/>
            <person name="Hogues M.E."/>
            <person name="Huang M."/>
            <person name="Idlebird D.G."/>
            <person name="Johnson R."/>
            <person name="Jolivet A."/>
            <person name="Jones S."/>
            <person name="Kagan R."/>
            <person name="King L.M."/>
            <person name="Leal B."/>
            <person name="Lebow H."/>
            <person name="Lee S."/>
            <person name="LeVan J.M."/>
            <person name="Lewis L.C."/>
            <person name="London P."/>
            <person name="Lorensuhewa L.M."/>
            <person name="Loulseged H."/>
            <person name="Lovett D.A."/>
            <person name="Lucier A."/>
            <person name="Lucier R.L."/>
            <person name="Ma J."/>
            <person name="Madu R.C."/>
            <person name="Mapua P."/>
            <person name="Martindale A.D."/>
            <person name="Martinez E."/>
            <person name="Massey E."/>
            <person name="Mawhiney S."/>
            <person name="Meador M.G."/>
            <person name="Mendez S."/>
            <person name="Mercado C."/>
            <person name="Mercado I.C."/>
            <person name="Merritt C.E."/>
            <person name="Miner Z.L."/>
            <person name="Minja E."/>
            <person name="Mitchell T."/>
            <person name="Mohabbat F."/>
            <person name="Mohabbat K."/>
            <person name="Montgomery B."/>
            <person name="Moore N."/>
            <person name="Morris S."/>
            <person name="Munidasa M."/>
            <person name="Ngo R.N."/>
            <person name="Nguyen N.B."/>
            <person name="Nickerson E."/>
            <person name="Nwaokelemeh O.O."/>
            <person name="Nwokenkwo S."/>
            <person name="Obregon M."/>
            <person name="Oguh M."/>
            <person name="Oragunye N."/>
            <person name="Oviedo R.J."/>
            <person name="Parish B.J."/>
            <person name="Parker D.N."/>
            <person name="Parrish J."/>
            <person name="Parks K.L."/>
            <person name="Paul H.A."/>
            <person name="Payton B.A."/>
            <person name="Perez A."/>
            <person name="Perrin W."/>
            <person name="Pickens A."/>
            <person name="Primus E.L."/>
            <person name="Pu L.-L."/>
            <person name="Puazo M."/>
            <person name="Quiles M.M."/>
            <person name="Quiroz J.B."/>
            <person name="Rabata D."/>
            <person name="Reeves K."/>
            <person name="Ruiz S.J."/>
            <person name="Shao H."/>
            <person name="Sisson I."/>
            <person name="Sonaike T."/>
            <person name="Sorelle R.P."/>
            <person name="Sutton A.E."/>
            <person name="Svatek A.F."/>
            <person name="Svetz L.A."/>
            <person name="Tamerisa K.S."/>
            <person name="Taylor T.R."/>
            <person name="Teague B."/>
            <person name="Thomas N."/>
            <person name="Thorn R.D."/>
            <person name="Trejos Z.Y."/>
            <person name="Trevino B.K."/>
            <person name="Ukegbu O.N."/>
            <person name="Urban J.B."/>
            <person name="Vasquez L.I."/>
            <person name="Vera V.A."/>
            <person name="Villasana D.M."/>
            <person name="Wang L."/>
            <person name="Ward-Moore S."/>
            <person name="Warren J.T."/>
            <person name="Wei X."/>
            <person name="White F."/>
            <person name="Williamson A.L."/>
            <person name="Wleczyk R."/>
            <person name="Wooden H.S."/>
            <person name="Wooden S.H."/>
            <person name="Yen J."/>
            <person name="Yoon L."/>
            <person name="Yoon V."/>
            <person name="Zorrilla S.E."/>
            <person name="Nelson D."/>
            <person name="Kucherlapati R."/>
            <person name="Weinstock G."/>
            <person name="Gibbs R.A."/>
        </authorList>
    </citation>
    <scope>NUCLEOTIDE SEQUENCE [LARGE SCALE GENOMIC DNA]</scope>
</reference>
<protein>
    <recommendedName>
        <fullName>Solute carrier family 15 member 5</fullName>
    </recommendedName>
</protein>
<dbReference type="EMBL" id="AC073574">
    <property type="status" value="NOT_ANNOTATED_CDS"/>
    <property type="molecule type" value="Genomic_DNA"/>
</dbReference>
<dbReference type="RefSeq" id="NP_001164269.1">
    <property type="nucleotide sequence ID" value="NM_001170798.1"/>
</dbReference>
<dbReference type="SMR" id="A6NIM6"/>
<dbReference type="FunCoup" id="A6NIM6">
    <property type="interactions" value="3"/>
</dbReference>
<dbReference type="IntAct" id="A6NIM6">
    <property type="interactions" value="2"/>
</dbReference>
<dbReference type="MINT" id="A6NIM6"/>
<dbReference type="STRING" id="9606.ENSP00000340402"/>
<dbReference type="TCDB" id="2.A.17.3.10">
    <property type="family name" value="the proton-dependent oligopeptide transporter (pot/ptr) family"/>
</dbReference>
<dbReference type="PhosphoSitePlus" id="A6NIM6"/>
<dbReference type="BioMuta" id="SLC15A5"/>
<dbReference type="MassIVE" id="A6NIM6"/>
<dbReference type="PaxDb" id="9606-ENSP00000340402"/>
<dbReference type="Antibodypedia" id="63873">
    <property type="antibodies" value="5 antibodies from 5 providers"/>
</dbReference>
<dbReference type="DNASU" id="729025"/>
<dbReference type="Ensembl" id="ENST00000344941.3">
    <property type="protein sequence ID" value="ENSP00000340402.3"/>
    <property type="gene ID" value="ENSG00000188991.3"/>
</dbReference>
<dbReference type="GeneID" id="729025"/>
<dbReference type="KEGG" id="hsa:729025"/>
<dbReference type="MANE-Select" id="ENST00000344941.3">
    <property type="protein sequence ID" value="ENSP00000340402.3"/>
    <property type="RefSeq nucleotide sequence ID" value="NM_001170798.1"/>
    <property type="RefSeq protein sequence ID" value="NP_001164269.1"/>
</dbReference>
<dbReference type="UCSC" id="uc021qvs.1">
    <property type="organism name" value="human"/>
</dbReference>
<dbReference type="AGR" id="HGNC:33455"/>
<dbReference type="CTD" id="729025"/>
<dbReference type="DisGeNET" id="729025"/>
<dbReference type="GeneCards" id="SLC15A5"/>
<dbReference type="HGNC" id="HGNC:33455">
    <property type="gene designation" value="SLC15A5"/>
</dbReference>
<dbReference type="HPA" id="ENSG00000188991">
    <property type="expression patterns" value="Not detected"/>
</dbReference>
<dbReference type="MIM" id="620324">
    <property type="type" value="gene"/>
</dbReference>
<dbReference type="neXtProt" id="NX_A6NIM6"/>
<dbReference type="OpenTargets" id="ENSG00000188991"/>
<dbReference type="PharmGKB" id="PA164725785"/>
<dbReference type="VEuPathDB" id="HostDB:ENSG00000188991"/>
<dbReference type="eggNOG" id="KOG1237">
    <property type="taxonomic scope" value="Eukaryota"/>
</dbReference>
<dbReference type="GeneTree" id="ENSGT00940000158916"/>
<dbReference type="HOGENOM" id="CLU_009313_6_2_1"/>
<dbReference type="InParanoid" id="A6NIM6"/>
<dbReference type="OMA" id="TVNLCFI"/>
<dbReference type="OrthoDB" id="8904098at2759"/>
<dbReference type="PAN-GO" id="A6NIM6">
    <property type="GO annotations" value="0 GO annotations based on evolutionary models"/>
</dbReference>
<dbReference type="PhylomeDB" id="A6NIM6"/>
<dbReference type="TreeFam" id="TF332925"/>
<dbReference type="PathwayCommons" id="A6NIM6"/>
<dbReference type="SignaLink" id="A6NIM6"/>
<dbReference type="BioGRID-ORCS" id="729025">
    <property type="hits" value="5 hits in 307 CRISPR screens"/>
</dbReference>
<dbReference type="GenomeRNAi" id="729025"/>
<dbReference type="Pharos" id="A6NIM6">
    <property type="development level" value="Tdark"/>
</dbReference>
<dbReference type="PRO" id="PR:A6NIM6"/>
<dbReference type="Proteomes" id="UP000005640">
    <property type="component" value="Chromosome 12"/>
</dbReference>
<dbReference type="RNAct" id="A6NIM6">
    <property type="molecule type" value="protein"/>
</dbReference>
<dbReference type="Bgee" id="ENSG00000188991">
    <property type="expression patterns" value="Expressed in male germ line stem cell (sensu Vertebrata) in testis and 19 other cell types or tissues"/>
</dbReference>
<dbReference type="GO" id="GO:0016020">
    <property type="term" value="C:membrane"/>
    <property type="evidence" value="ECO:0000318"/>
    <property type="project" value="GO_Central"/>
</dbReference>
<dbReference type="GO" id="GO:0015293">
    <property type="term" value="F:symporter activity"/>
    <property type="evidence" value="ECO:0007669"/>
    <property type="project" value="UniProtKB-KW"/>
</dbReference>
<dbReference type="GO" id="GO:0022857">
    <property type="term" value="F:transmembrane transporter activity"/>
    <property type="evidence" value="ECO:0000318"/>
    <property type="project" value="GO_Central"/>
</dbReference>
<dbReference type="GO" id="GO:0015833">
    <property type="term" value="P:peptide transport"/>
    <property type="evidence" value="ECO:0007669"/>
    <property type="project" value="UniProtKB-KW"/>
</dbReference>
<dbReference type="GO" id="GO:0015031">
    <property type="term" value="P:protein transport"/>
    <property type="evidence" value="ECO:0007669"/>
    <property type="project" value="UniProtKB-KW"/>
</dbReference>
<dbReference type="GO" id="GO:0055085">
    <property type="term" value="P:transmembrane transport"/>
    <property type="evidence" value="ECO:0000318"/>
    <property type="project" value="GO_Central"/>
</dbReference>
<dbReference type="CDD" id="cd17349">
    <property type="entry name" value="MFS_SLC15A5"/>
    <property type="match status" value="1"/>
</dbReference>
<dbReference type="FunFam" id="1.20.1250.20:FF:000316">
    <property type="entry name" value="Solute carrier family 15, member 5"/>
    <property type="match status" value="1"/>
</dbReference>
<dbReference type="Gene3D" id="1.20.1250.20">
    <property type="entry name" value="MFS general substrate transporter like domains"/>
    <property type="match status" value="1"/>
</dbReference>
<dbReference type="InterPro" id="IPR036259">
    <property type="entry name" value="MFS_trans_sf"/>
</dbReference>
<dbReference type="InterPro" id="IPR000109">
    <property type="entry name" value="POT_fam"/>
</dbReference>
<dbReference type="PANTHER" id="PTHR11654">
    <property type="entry name" value="OLIGOPEPTIDE TRANSPORTER-RELATED"/>
    <property type="match status" value="1"/>
</dbReference>
<dbReference type="Pfam" id="PF00854">
    <property type="entry name" value="PTR2"/>
    <property type="match status" value="1"/>
</dbReference>
<dbReference type="SUPFAM" id="SSF103473">
    <property type="entry name" value="MFS general substrate transporter"/>
    <property type="match status" value="2"/>
</dbReference>
<keyword id="KW-0472">Membrane</keyword>
<keyword id="KW-0571">Peptide transport</keyword>
<keyword id="KW-0653">Protein transport</keyword>
<keyword id="KW-1185">Reference proteome</keyword>
<keyword id="KW-0769">Symport</keyword>
<keyword id="KW-0812">Transmembrane</keyword>
<keyword id="KW-1133">Transmembrane helix</keyword>
<keyword id="KW-0813">Transport</keyword>